<gene>
    <name type="primary">Immp2l</name>
</gene>
<reference key="1">
    <citation type="journal article" date="2001" name="Am. J. Hum. Genet.">
        <title>Disruption of a novel gene (IMMP2L) by a breakpoint in 7q31 associated with Tourette syndrome.</title>
        <authorList>
            <person name="Petek E."/>
            <person name="Windpassinger C."/>
            <person name="Vincent J.B."/>
            <person name="Cheung J."/>
            <person name="Boright A.P."/>
            <person name="Scherer S.W."/>
            <person name="Kroisel P.M."/>
            <person name="Wagner K."/>
        </authorList>
    </citation>
    <scope>NUCLEOTIDE SEQUENCE [MRNA]</scope>
</reference>
<reference key="2">
    <citation type="journal article" date="2005" name="Science">
        <title>The transcriptional landscape of the mammalian genome.</title>
        <authorList>
            <person name="Carninci P."/>
            <person name="Kasukawa T."/>
            <person name="Katayama S."/>
            <person name="Gough J."/>
            <person name="Frith M.C."/>
            <person name="Maeda N."/>
            <person name="Oyama R."/>
            <person name="Ravasi T."/>
            <person name="Lenhard B."/>
            <person name="Wells C."/>
            <person name="Kodzius R."/>
            <person name="Shimokawa K."/>
            <person name="Bajic V.B."/>
            <person name="Brenner S.E."/>
            <person name="Batalov S."/>
            <person name="Forrest A.R."/>
            <person name="Zavolan M."/>
            <person name="Davis M.J."/>
            <person name="Wilming L.G."/>
            <person name="Aidinis V."/>
            <person name="Allen J.E."/>
            <person name="Ambesi-Impiombato A."/>
            <person name="Apweiler R."/>
            <person name="Aturaliya R.N."/>
            <person name="Bailey T.L."/>
            <person name="Bansal M."/>
            <person name="Baxter L."/>
            <person name="Beisel K.W."/>
            <person name="Bersano T."/>
            <person name="Bono H."/>
            <person name="Chalk A.M."/>
            <person name="Chiu K.P."/>
            <person name="Choudhary V."/>
            <person name="Christoffels A."/>
            <person name="Clutterbuck D.R."/>
            <person name="Crowe M.L."/>
            <person name="Dalla E."/>
            <person name="Dalrymple B.P."/>
            <person name="de Bono B."/>
            <person name="Della Gatta G."/>
            <person name="di Bernardo D."/>
            <person name="Down T."/>
            <person name="Engstrom P."/>
            <person name="Fagiolini M."/>
            <person name="Faulkner G."/>
            <person name="Fletcher C.F."/>
            <person name="Fukushima T."/>
            <person name="Furuno M."/>
            <person name="Futaki S."/>
            <person name="Gariboldi M."/>
            <person name="Georgii-Hemming P."/>
            <person name="Gingeras T.R."/>
            <person name="Gojobori T."/>
            <person name="Green R.E."/>
            <person name="Gustincich S."/>
            <person name="Harbers M."/>
            <person name="Hayashi Y."/>
            <person name="Hensch T.K."/>
            <person name="Hirokawa N."/>
            <person name="Hill D."/>
            <person name="Huminiecki L."/>
            <person name="Iacono M."/>
            <person name="Ikeo K."/>
            <person name="Iwama A."/>
            <person name="Ishikawa T."/>
            <person name="Jakt M."/>
            <person name="Kanapin A."/>
            <person name="Katoh M."/>
            <person name="Kawasawa Y."/>
            <person name="Kelso J."/>
            <person name="Kitamura H."/>
            <person name="Kitano H."/>
            <person name="Kollias G."/>
            <person name="Krishnan S.P."/>
            <person name="Kruger A."/>
            <person name="Kummerfeld S.K."/>
            <person name="Kurochkin I.V."/>
            <person name="Lareau L.F."/>
            <person name="Lazarevic D."/>
            <person name="Lipovich L."/>
            <person name="Liu J."/>
            <person name="Liuni S."/>
            <person name="McWilliam S."/>
            <person name="Madan Babu M."/>
            <person name="Madera M."/>
            <person name="Marchionni L."/>
            <person name="Matsuda H."/>
            <person name="Matsuzawa S."/>
            <person name="Miki H."/>
            <person name="Mignone F."/>
            <person name="Miyake S."/>
            <person name="Morris K."/>
            <person name="Mottagui-Tabar S."/>
            <person name="Mulder N."/>
            <person name="Nakano N."/>
            <person name="Nakauchi H."/>
            <person name="Ng P."/>
            <person name="Nilsson R."/>
            <person name="Nishiguchi S."/>
            <person name="Nishikawa S."/>
            <person name="Nori F."/>
            <person name="Ohara O."/>
            <person name="Okazaki Y."/>
            <person name="Orlando V."/>
            <person name="Pang K.C."/>
            <person name="Pavan W.J."/>
            <person name="Pavesi G."/>
            <person name="Pesole G."/>
            <person name="Petrovsky N."/>
            <person name="Piazza S."/>
            <person name="Reed J."/>
            <person name="Reid J.F."/>
            <person name="Ring B.Z."/>
            <person name="Ringwald M."/>
            <person name="Rost B."/>
            <person name="Ruan Y."/>
            <person name="Salzberg S.L."/>
            <person name="Sandelin A."/>
            <person name="Schneider C."/>
            <person name="Schoenbach C."/>
            <person name="Sekiguchi K."/>
            <person name="Semple C.A."/>
            <person name="Seno S."/>
            <person name="Sessa L."/>
            <person name="Sheng Y."/>
            <person name="Shibata Y."/>
            <person name="Shimada H."/>
            <person name="Shimada K."/>
            <person name="Silva D."/>
            <person name="Sinclair B."/>
            <person name="Sperling S."/>
            <person name="Stupka E."/>
            <person name="Sugiura K."/>
            <person name="Sultana R."/>
            <person name="Takenaka Y."/>
            <person name="Taki K."/>
            <person name="Tammoja K."/>
            <person name="Tan S.L."/>
            <person name="Tang S."/>
            <person name="Taylor M.S."/>
            <person name="Tegner J."/>
            <person name="Teichmann S.A."/>
            <person name="Ueda H.R."/>
            <person name="van Nimwegen E."/>
            <person name="Verardo R."/>
            <person name="Wei C.L."/>
            <person name="Yagi K."/>
            <person name="Yamanishi H."/>
            <person name="Zabarovsky E."/>
            <person name="Zhu S."/>
            <person name="Zimmer A."/>
            <person name="Hide W."/>
            <person name="Bult C."/>
            <person name="Grimmond S.M."/>
            <person name="Teasdale R.D."/>
            <person name="Liu E.T."/>
            <person name="Brusic V."/>
            <person name="Quackenbush J."/>
            <person name="Wahlestedt C."/>
            <person name="Mattick J.S."/>
            <person name="Hume D.A."/>
            <person name="Kai C."/>
            <person name="Sasaki D."/>
            <person name="Tomaru Y."/>
            <person name="Fukuda S."/>
            <person name="Kanamori-Katayama M."/>
            <person name="Suzuki M."/>
            <person name="Aoki J."/>
            <person name="Arakawa T."/>
            <person name="Iida J."/>
            <person name="Imamura K."/>
            <person name="Itoh M."/>
            <person name="Kato T."/>
            <person name="Kawaji H."/>
            <person name="Kawagashira N."/>
            <person name="Kawashima T."/>
            <person name="Kojima M."/>
            <person name="Kondo S."/>
            <person name="Konno H."/>
            <person name="Nakano K."/>
            <person name="Ninomiya N."/>
            <person name="Nishio T."/>
            <person name="Okada M."/>
            <person name="Plessy C."/>
            <person name="Shibata K."/>
            <person name="Shiraki T."/>
            <person name="Suzuki S."/>
            <person name="Tagami M."/>
            <person name="Waki K."/>
            <person name="Watahiki A."/>
            <person name="Okamura-Oho Y."/>
            <person name="Suzuki H."/>
            <person name="Kawai J."/>
            <person name="Hayashizaki Y."/>
        </authorList>
    </citation>
    <scope>NUCLEOTIDE SEQUENCE [LARGE SCALE MRNA]</scope>
    <source>
        <strain>C57BL/6J</strain>
        <tissue>Eye</tissue>
        <tissue>Testis</tissue>
    </source>
</reference>
<reference key="3">
    <citation type="journal article" date="2004" name="Genome Res.">
        <title>The status, quality, and expansion of the NIH full-length cDNA project: the Mammalian Gene Collection (MGC).</title>
        <authorList>
            <consortium name="The MGC Project Team"/>
        </authorList>
    </citation>
    <scope>NUCLEOTIDE SEQUENCE [LARGE SCALE MRNA]</scope>
    <source>
        <strain>Czech II</strain>
        <tissue>Lung</tissue>
    </source>
</reference>
<reference key="4">
    <citation type="journal article" date="2010" name="Cell">
        <title>A tissue-specific atlas of mouse protein phosphorylation and expression.</title>
        <authorList>
            <person name="Huttlin E.L."/>
            <person name="Jedrychowski M.P."/>
            <person name="Elias J.E."/>
            <person name="Goswami T."/>
            <person name="Rad R."/>
            <person name="Beausoleil S.A."/>
            <person name="Villen J."/>
            <person name="Haas W."/>
            <person name="Sowa M.E."/>
            <person name="Gygi S.P."/>
        </authorList>
    </citation>
    <scope>IDENTIFICATION BY MASS SPECTROMETRY [LARGE SCALE ANALYSIS]</scope>
    <source>
        <tissue>Testis</tissue>
    </source>
</reference>
<name>IMP2L_MOUSE</name>
<accession>Q8BPT6</accession>
<accession>Q3TTI2</accession>
<accession>Q925F6</accession>
<organism>
    <name type="scientific">Mus musculus</name>
    <name type="common">Mouse</name>
    <dbReference type="NCBI Taxonomy" id="10090"/>
    <lineage>
        <taxon>Eukaryota</taxon>
        <taxon>Metazoa</taxon>
        <taxon>Chordata</taxon>
        <taxon>Craniata</taxon>
        <taxon>Vertebrata</taxon>
        <taxon>Euteleostomi</taxon>
        <taxon>Mammalia</taxon>
        <taxon>Eutheria</taxon>
        <taxon>Euarchontoglires</taxon>
        <taxon>Glires</taxon>
        <taxon>Rodentia</taxon>
        <taxon>Myomorpha</taxon>
        <taxon>Muroidea</taxon>
        <taxon>Muridae</taxon>
        <taxon>Murinae</taxon>
        <taxon>Mus</taxon>
        <taxon>Mus</taxon>
    </lineage>
</organism>
<comment type="function">
    <text evidence="1">Catalyzes the removal of transit peptides required for the targeting of proteins from the mitochondrial matrix, across the inner membrane, into the inter-membrane space. Known to process the nuclear encoded protein DIABLO (By similarity).</text>
</comment>
<comment type="subunit">
    <text evidence="1">Heterodimer of 2 subunits, IMMPL1 and IMMPL2.</text>
</comment>
<comment type="subcellular location">
    <subcellularLocation>
        <location evidence="1">Mitochondrion inner membrane</location>
        <topology evidence="1">Single-pass membrane protein</topology>
    </subcellularLocation>
</comment>
<comment type="similarity">
    <text evidence="3">Belongs to the peptidase S26 family. IMP2 subfamily.</text>
</comment>
<protein>
    <recommendedName>
        <fullName>Mitochondrial inner membrane protease subunit 2</fullName>
        <ecNumber>3.4.21.-</ecNumber>
    </recommendedName>
    <alternativeName>
        <fullName>IMP2-like protein</fullName>
    </alternativeName>
</protein>
<evidence type="ECO:0000250" key="1"/>
<evidence type="ECO:0000255" key="2"/>
<evidence type="ECO:0000305" key="3"/>
<feature type="chain" id="PRO_0000259578" description="Mitochondrial inner membrane protease subunit 2">
    <location>
        <begin position="1"/>
        <end position="175"/>
    </location>
</feature>
<feature type="transmembrane region" description="Helical" evidence="2">
    <location>
        <begin position="19"/>
        <end position="37"/>
    </location>
</feature>
<feature type="active site" evidence="1">
    <location>
        <position position="43"/>
    </location>
</feature>
<feature type="active site" evidence="1">
    <location>
        <position position="91"/>
    </location>
</feature>
<feature type="sequence conflict" description="In Ref. 2; BAE36343." evidence="3" ref="2">
    <original>E</original>
    <variation>D</variation>
    <location>
        <position position="97"/>
    </location>
</feature>
<feature type="sequence conflict" description="In Ref. 1; AAK52906." evidence="3" ref="1">
    <original>R</original>
    <variation>G</variation>
    <location>
        <position position="109"/>
    </location>
</feature>
<proteinExistence type="evidence at protein level"/>
<sequence>MAQSQSWARRCFKAFCKGFFVAVPVAVTFLDRVACVARVEGSSMQPSLNPGGSQSSDVVLLNHWKVRNFEVQRGDIVSLVSPKNPEQKIIKRVIALEGDIVRTIGHKNRLVKVPRGHMWVEGDHHGHSFDSNSFGPVSLGLLHAHATHILWPPERWQRLESVLPPERCPLQTGEK</sequence>
<dbReference type="EC" id="3.4.21.-"/>
<dbReference type="EMBL" id="AF359564">
    <property type="protein sequence ID" value="AAK52906.1"/>
    <property type="molecule type" value="mRNA"/>
</dbReference>
<dbReference type="EMBL" id="AK053361">
    <property type="protein sequence ID" value="BAC35362.1"/>
    <property type="molecule type" value="mRNA"/>
</dbReference>
<dbReference type="EMBL" id="AK161351">
    <property type="protein sequence ID" value="BAE36343.1"/>
    <property type="molecule type" value="mRNA"/>
</dbReference>
<dbReference type="EMBL" id="BC100557">
    <property type="protein sequence ID" value="AAI00558.1"/>
    <property type="molecule type" value="mRNA"/>
</dbReference>
<dbReference type="CCDS" id="CCDS83961.1"/>
<dbReference type="RefSeq" id="NP_444352.2">
    <property type="nucleotide sequence ID" value="NM_053122.4"/>
</dbReference>
<dbReference type="SMR" id="Q8BPT6"/>
<dbReference type="BioGRID" id="220295">
    <property type="interactions" value="1"/>
</dbReference>
<dbReference type="FunCoup" id="Q8BPT6">
    <property type="interactions" value="1504"/>
</dbReference>
<dbReference type="STRING" id="10090.ENSMUSP00000118779"/>
<dbReference type="MEROPS" id="S26.A09"/>
<dbReference type="GlyGen" id="Q8BPT6">
    <property type="glycosylation" value="1 site, 1 O-linked glycan (1 site)"/>
</dbReference>
<dbReference type="PhosphoSitePlus" id="Q8BPT6"/>
<dbReference type="SwissPalm" id="Q8BPT6"/>
<dbReference type="PaxDb" id="10090-ENSMUSP00000118779"/>
<dbReference type="PeptideAtlas" id="Q8BPT6"/>
<dbReference type="ProteomicsDB" id="269479"/>
<dbReference type="Antibodypedia" id="17351">
    <property type="antibodies" value="131 antibodies from 27 providers"/>
</dbReference>
<dbReference type="DNASU" id="93757"/>
<dbReference type="Ensembl" id="ENSMUST00000132121.8">
    <property type="protein sequence ID" value="ENSMUSP00000118779.2"/>
    <property type="gene ID" value="ENSMUSG00000056899.11"/>
</dbReference>
<dbReference type="Ensembl" id="ENSMUST00000134965.8">
    <property type="protein sequence ID" value="ENSMUSP00000116441.2"/>
    <property type="gene ID" value="ENSMUSG00000056899.11"/>
</dbReference>
<dbReference type="GeneID" id="93757"/>
<dbReference type="KEGG" id="mmu:93757"/>
<dbReference type="UCSC" id="uc029rsc.2">
    <property type="organism name" value="mouse"/>
</dbReference>
<dbReference type="AGR" id="MGI:2135611"/>
<dbReference type="CTD" id="83943"/>
<dbReference type="MGI" id="MGI:2135611">
    <property type="gene designation" value="Immp2l"/>
</dbReference>
<dbReference type="VEuPathDB" id="HostDB:ENSMUSG00000056899"/>
<dbReference type="eggNOG" id="KOG1568">
    <property type="taxonomic scope" value="Eukaryota"/>
</dbReference>
<dbReference type="GeneTree" id="ENSGT00550000075044"/>
<dbReference type="HOGENOM" id="CLU_028723_4_1_1"/>
<dbReference type="InParanoid" id="Q8BPT6"/>
<dbReference type="OMA" id="WIPVIAW"/>
<dbReference type="OrthoDB" id="9996127at2759"/>
<dbReference type="PhylomeDB" id="Q8BPT6"/>
<dbReference type="TreeFam" id="TF315065"/>
<dbReference type="BioGRID-ORCS" id="93757">
    <property type="hits" value="1 hit in 56 CRISPR screens"/>
</dbReference>
<dbReference type="ChiTaRS" id="Immp2l">
    <property type="organism name" value="mouse"/>
</dbReference>
<dbReference type="PRO" id="PR:Q8BPT6"/>
<dbReference type="Proteomes" id="UP000000589">
    <property type="component" value="Chromosome 12"/>
</dbReference>
<dbReference type="RNAct" id="Q8BPT6">
    <property type="molecule type" value="protein"/>
</dbReference>
<dbReference type="Bgee" id="ENSMUSG00000056899">
    <property type="expression patterns" value="Expressed in spermatid and 199 other cell types or tissues"/>
</dbReference>
<dbReference type="ExpressionAtlas" id="Q8BPT6">
    <property type="expression patterns" value="baseline and differential"/>
</dbReference>
<dbReference type="GO" id="GO:0005743">
    <property type="term" value="C:mitochondrial inner membrane"/>
    <property type="evidence" value="ECO:0000247"/>
    <property type="project" value="MGI"/>
</dbReference>
<dbReference type="GO" id="GO:0042720">
    <property type="term" value="C:mitochondrial inner membrane peptidase complex"/>
    <property type="evidence" value="ECO:0000316"/>
    <property type="project" value="MGI"/>
</dbReference>
<dbReference type="GO" id="GO:0005739">
    <property type="term" value="C:mitochondrion"/>
    <property type="evidence" value="ECO:0007005"/>
    <property type="project" value="MGI"/>
</dbReference>
<dbReference type="GO" id="GO:0008233">
    <property type="term" value="F:peptidase activity"/>
    <property type="evidence" value="ECO:0000315"/>
    <property type="project" value="MGI"/>
</dbReference>
<dbReference type="GO" id="GO:0004252">
    <property type="term" value="F:serine-type endopeptidase activity"/>
    <property type="evidence" value="ECO:0007669"/>
    <property type="project" value="InterPro"/>
</dbReference>
<dbReference type="GO" id="GO:0008015">
    <property type="term" value="P:blood circulation"/>
    <property type="evidence" value="ECO:0000315"/>
    <property type="project" value="MGI"/>
</dbReference>
<dbReference type="GO" id="GO:0007420">
    <property type="term" value="P:brain development"/>
    <property type="evidence" value="ECO:0000315"/>
    <property type="project" value="MGI"/>
</dbReference>
<dbReference type="GO" id="GO:0061300">
    <property type="term" value="P:cerebellum vasculature development"/>
    <property type="evidence" value="ECO:0000315"/>
    <property type="project" value="MGI"/>
</dbReference>
<dbReference type="GO" id="GO:0006974">
    <property type="term" value="P:DNA damage response"/>
    <property type="evidence" value="ECO:0000315"/>
    <property type="project" value="MGI"/>
</dbReference>
<dbReference type="GO" id="GO:0033108">
    <property type="term" value="P:mitochondrial respiratory chain complex assembly"/>
    <property type="evidence" value="ECO:0000315"/>
    <property type="project" value="MGI"/>
</dbReference>
<dbReference type="GO" id="GO:0001541">
    <property type="term" value="P:ovarian follicle development"/>
    <property type="evidence" value="ECO:0000315"/>
    <property type="project" value="MGI"/>
</dbReference>
<dbReference type="GO" id="GO:0030728">
    <property type="term" value="P:ovulation"/>
    <property type="evidence" value="ECO:0000315"/>
    <property type="project" value="MGI"/>
</dbReference>
<dbReference type="GO" id="GO:0008104">
    <property type="term" value="P:protein localization"/>
    <property type="evidence" value="ECO:0000247"/>
    <property type="project" value="MGI"/>
</dbReference>
<dbReference type="GO" id="GO:0006627">
    <property type="term" value="P:protein processing involved in protein targeting to mitochondrion"/>
    <property type="evidence" value="ECO:0000316"/>
    <property type="project" value="MGI"/>
</dbReference>
<dbReference type="GO" id="GO:0022904">
    <property type="term" value="P:respiratory electron transport chain"/>
    <property type="evidence" value="ECO:0000315"/>
    <property type="project" value="MGI"/>
</dbReference>
<dbReference type="GO" id="GO:0006465">
    <property type="term" value="P:signal peptide processing"/>
    <property type="evidence" value="ECO:0007669"/>
    <property type="project" value="InterPro"/>
</dbReference>
<dbReference type="GO" id="GO:0007283">
    <property type="term" value="P:spermatogenesis"/>
    <property type="evidence" value="ECO:0000315"/>
    <property type="project" value="MGI"/>
</dbReference>
<dbReference type="GO" id="GO:0006801">
    <property type="term" value="P:superoxide metabolic process"/>
    <property type="evidence" value="ECO:0000315"/>
    <property type="project" value="MGI"/>
</dbReference>
<dbReference type="CDD" id="cd06530">
    <property type="entry name" value="S26_SPase_I"/>
    <property type="match status" value="1"/>
</dbReference>
<dbReference type="FunFam" id="2.10.109.10:FF:000005">
    <property type="entry name" value="Mitochondrial inner membrane protease subunit"/>
    <property type="match status" value="1"/>
</dbReference>
<dbReference type="Gene3D" id="2.10.109.10">
    <property type="entry name" value="Umud Fragment, subunit A"/>
    <property type="match status" value="1"/>
</dbReference>
<dbReference type="InterPro" id="IPR037730">
    <property type="entry name" value="IMP2"/>
</dbReference>
<dbReference type="InterPro" id="IPR036286">
    <property type="entry name" value="LexA/Signal_pep-like_sf"/>
</dbReference>
<dbReference type="InterPro" id="IPR000223">
    <property type="entry name" value="Pept_S26A_signal_pept_1"/>
</dbReference>
<dbReference type="InterPro" id="IPR019758">
    <property type="entry name" value="Pept_S26A_signal_pept_1_CS"/>
</dbReference>
<dbReference type="InterPro" id="IPR019533">
    <property type="entry name" value="Peptidase_S26"/>
</dbReference>
<dbReference type="NCBIfam" id="TIGR02227">
    <property type="entry name" value="sigpep_I_bact"/>
    <property type="match status" value="1"/>
</dbReference>
<dbReference type="PANTHER" id="PTHR46041">
    <property type="entry name" value="MITOCHONDRIAL INNER MEMBRANE PROTEASE SUBUNIT 2"/>
    <property type="match status" value="1"/>
</dbReference>
<dbReference type="PANTHER" id="PTHR46041:SF2">
    <property type="entry name" value="MITOCHONDRIAL INNER MEMBRANE PROTEASE SUBUNIT 2"/>
    <property type="match status" value="1"/>
</dbReference>
<dbReference type="Pfam" id="PF10502">
    <property type="entry name" value="Peptidase_S26"/>
    <property type="match status" value="2"/>
</dbReference>
<dbReference type="PRINTS" id="PR00727">
    <property type="entry name" value="LEADERPTASE"/>
</dbReference>
<dbReference type="SUPFAM" id="SSF51306">
    <property type="entry name" value="LexA/Signal peptidase"/>
    <property type="match status" value="1"/>
</dbReference>
<dbReference type="PROSITE" id="PS00761">
    <property type="entry name" value="SPASE_I_3"/>
    <property type="match status" value="1"/>
</dbReference>
<keyword id="KW-0378">Hydrolase</keyword>
<keyword id="KW-0472">Membrane</keyword>
<keyword id="KW-0496">Mitochondrion</keyword>
<keyword id="KW-0999">Mitochondrion inner membrane</keyword>
<keyword id="KW-0645">Protease</keyword>
<keyword id="KW-1185">Reference proteome</keyword>
<keyword id="KW-0812">Transmembrane</keyword>
<keyword id="KW-1133">Transmembrane helix</keyword>